<evidence type="ECO:0000255" key="1">
    <source>
        <dbReference type="HAMAP-Rule" id="MF_01322"/>
    </source>
</evidence>
<accession>Q1BDE9</accession>
<protein>
    <recommendedName>
        <fullName evidence="1">DNA-directed RNA polymerase subunit beta'</fullName>
        <shortName evidence="1">RNAP subunit beta'</shortName>
        <ecNumber evidence="1">2.7.7.6</ecNumber>
    </recommendedName>
    <alternativeName>
        <fullName evidence="1">RNA polymerase subunit beta'</fullName>
    </alternativeName>
    <alternativeName>
        <fullName evidence="1">Transcriptase subunit beta'</fullName>
    </alternativeName>
</protein>
<comment type="function">
    <text evidence="1">DNA-dependent RNA polymerase catalyzes the transcription of DNA into RNA using the four ribonucleoside triphosphates as substrates.</text>
</comment>
<comment type="catalytic activity">
    <reaction evidence="1">
        <text>RNA(n) + a ribonucleoside 5'-triphosphate = RNA(n+1) + diphosphate</text>
        <dbReference type="Rhea" id="RHEA:21248"/>
        <dbReference type="Rhea" id="RHEA-COMP:14527"/>
        <dbReference type="Rhea" id="RHEA-COMP:17342"/>
        <dbReference type="ChEBI" id="CHEBI:33019"/>
        <dbReference type="ChEBI" id="CHEBI:61557"/>
        <dbReference type="ChEBI" id="CHEBI:140395"/>
        <dbReference type="EC" id="2.7.7.6"/>
    </reaction>
</comment>
<comment type="cofactor">
    <cofactor evidence="1">
        <name>Mg(2+)</name>
        <dbReference type="ChEBI" id="CHEBI:18420"/>
    </cofactor>
    <text evidence="1">Binds 1 Mg(2+) ion per subunit.</text>
</comment>
<comment type="cofactor">
    <cofactor evidence="1">
        <name>Zn(2+)</name>
        <dbReference type="ChEBI" id="CHEBI:29105"/>
    </cofactor>
    <text evidence="1">Binds 2 Zn(2+) ions per subunit.</text>
</comment>
<comment type="subunit">
    <text evidence="1">The RNAP catalytic core consists of 2 alpha, 1 beta, 1 beta' and 1 omega subunit. When a sigma factor is associated with the core the holoenzyme is formed, which can initiate transcription.</text>
</comment>
<comment type="similarity">
    <text evidence="1">Belongs to the RNA polymerase beta' chain family.</text>
</comment>
<keyword id="KW-0240">DNA-directed RNA polymerase</keyword>
<keyword id="KW-0460">Magnesium</keyword>
<keyword id="KW-0479">Metal-binding</keyword>
<keyword id="KW-0548">Nucleotidyltransferase</keyword>
<keyword id="KW-0804">Transcription</keyword>
<keyword id="KW-0808">Transferase</keyword>
<keyword id="KW-0862">Zinc</keyword>
<gene>
    <name evidence="1" type="primary">rpoC</name>
    <name type="ordered locus">Mmcs_0970</name>
</gene>
<organism>
    <name type="scientific">Mycobacterium sp. (strain MCS)</name>
    <dbReference type="NCBI Taxonomy" id="164756"/>
    <lineage>
        <taxon>Bacteria</taxon>
        <taxon>Bacillati</taxon>
        <taxon>Actinomycetota</taxon>
        <taxon>Actinomycetes</taxon>
        <taxon>Mycobacteriales</taxon>
        <taxon>Mycobacteriaceae</taxon>
        <taxon>Mycobacterium</taxon>
    </lineage>
</organism>
<proteinExistence type="inferred from homology"/>
<dbReference type="EC" id="2.7.7.6" evidence="1"/>
<dbReference type="EMBL" id="CP000384">
    <property type="protein sequence ID" value="ABG07085.1"/>
    <property type="molecule type" value="Genomic_DNA"/>
</dbReference>
<dbReference type="SMR" id="Q1BDE9"/>
<dbReference type="KEGG" id="mmc:Mmcs_0970"/>
<dbReference type="HOGENOM" id="CLU_000524_3_1_11"/>
<dbReference type="BioCyc" id="MSP164756:G1G6O-994-MONOMER"/>
<dbReference type="GO" id="GO:0000428">
    <property type="term" value="C:DNA-directed RNA polymerase complex"/>
    <property type="evidence" value="ECO:0007669"/>
    <property type="project" value="UniProtKB-KW"/>
</dbReference>
<dbReference type="GO" id="GO:0003677">
    <property type="term" value="F:DNA binding"/>
    <property type="evidence" value="ECO:0007669"/>
    <property type="project" value="UniProtKB-UniRule"/>
</dbReference>
<dbReference type="GO" id="GO:0003899">
    <property type="term" value="F:DNA-directed RNA polymerase activity"/>
    <property type="evidence" value="ECO:0007669"/>
    <property type="project" value="UniProtKB-UniRule"/>
</dbReference>
<dbReference type="GO" id="GO:0000287">
    <property type="term" value="F:magnesium ion binding"/>
    <property type="evidence" value="ECO:0007669"/>
    <property type="project" value="UniProtKB-UniRule"/>
</dbReference>
<dbReference type="GO" id="GO:0008270">
    <property type="term" value="F:zinc ion binding"/>
    <property type="evidence" value="ECO:0007669"/>
    <property type="project" value="UniProtKB-UniRule"/>
</dbReference>
<dbReference type="GO" id="GO:0006351">
    <property type="term" value="P:DNA-templated transcription"/>
    <property type="evidence" value="ECO:0007669"/>
    <property type="project" value="UniProtKB-UniRule"/>
</dbReference>
<dbReference type="CDD" id="cd02655">
    <property type="entry name" value="RNAP_beta'_C"/>
    <property type="match status" value="1"/>
</dbReference>
<dbReference type="CDD" id="cd01609">
    <property type="entry name" value="RNAP_beta'_N"/>
    <property type="match status" value="1"/>
</dbReference>
<dbReference type="FunFam" id="1.10.150.390:FF:000002">
    <property type="entry name" value="DNA-directed RNA polymerase subunit beta"/>
    <property type="match status" value="1"/>
</dbReference>
<dbReference type="FunFam" id="1.10.40.90:FF:000001">
    <property type="entry name" value="DNA-directed RNA polymerase subunit beta"/>
    <property type="match status" value="1"/>
</dbReference>
<dbReference type="FunFam" id="4.10.860.120:FF:000001">
    <property type="entry name" value="DNA-directed RNA polymerase subunit beta"/>
    <property type="match status" value="1"/>
</dbReference>
<dbReference type="Gene3D" id="1.10.132.30">
    <property type="match status" value="1"/>
</dbReference>
<dbReference type="Gene3D" id="1.10.150.390">
    <property type="match status" value="1"/>
</dbReference>
<dbReference type="Gene3D" id="1.10.1790.20">
    <property type="match status" value="1"/>
</dbReference>
<dbReference type="Gene3D" id="1.10.40.90">
    <property type="match status" value="1"/>
</dbReference>
<dbReference type="Gene3D" id="2.40.40.20">
    <property type="match status" value="1"/>
</dbReference>
<dbReference type="Gene3D" id="2.40.50.100">
    <property type="match status" value="1"/>
</dbReference>
<dbReference type="Gene3D" id="4.10.860.120">
    <property type="entry name" value="RNA polymerase II, clamp domain"/>
    <property type="match status" value="1"/>
</dbReference>
<dbReference type="Gene3D" id="1.10.274.100">
    <property type="entry name" value="RNA polymerase Rpb1, domain 3"/>
    <property type="match status" value="1"/>
</dbReference>
<dbReference type="HAMAP" id="MF_01322">
    <property type="entry name" value="RNApol_bact_RpoC"/>
    <property type="match status" value="1"/>
</dbReference>
<dbReference type="InterPro" id="IPR045867">
    <property type="entry name" value="DNA-dir_RpoC_beta_prime"/>
</dbReference>
<dbReference type="InterPro" id="IPR012754">
    <property type="entry name" value="DNA-dir_RpoC_beta_prime_bact"/>
</dbReference>
<dbReference type="InterPro" id="IPR000722">
    <property type="entry name" value="RNA_pol_asu"/>
</dbReference>
<dbReference type="InterPro" id="IPR006592">
    <property type="entry name" value="RNA_pol_N"/>
</dbReference>
<dbReference type="InterPro" id="IPR007080">
    <property type="entry name" value="RNA_pol_Rpb1_1"/>
</dbReference>
<dbReference type="InterPro" id="IPR007066">
    <property type="entry name" value="RNA_pol_Rpb1_3"/>
</dbReference>
<dbReference type="InterPro" id="IPR042102">
    <property type="entry name" value="RNA_pol_Rpb1_3_sf"/>
</dbReference>
<dbReference type="InterPro" id="IPR007083">
    <property type="entry name" value="RNA_pol_Rpb1_4"/>
</dbReference>
<dbReference type="InterPro" id="IPR007081">
    <property type="entry name" value="RNA_pol_Rpb1_5"/>
</dbReference>
<dbReference type="InterPro" id="IPR044893">
    <property type="entry name" value="RNA_pol_Rpb1_clamp_domain"/>
</dbReference>
<dbReference type="InterPro" id="IPR038120">
    <property type="entry name" value="Rpb1_funnel_sf"/>
</dbReference>
<dbReference type="NCBIfam" id="NF011498">
    <property type="entry name" value="PRK14906.1"/>
    <property type="match status" value="1"/>
</dbReference>
<dbReference type="NCBIfam" id="TIGR02386">
    <property type="entry name" value="rpoC_TIGR"/>
    <property type="match status" value="1"/>
</dbReference>
<dbReference type="PANTHER" id="PTHR19376">
    <property type="entry name" value="DNA-DIRECTED RNA POLYMERASE"/>
    <property type="match status" value="1"/>
</dbReference>
<dbReference type="PANTHER" id="PTHR19376:SF54">
    <property type="entry name" value="DNA-DIRECTED RNA POLYMERASE SUBUNIT BETA"/>
    <property type="match status" value="1"/>
</dbReference>
<dbReference type="Pfam" id="PF04997">
    <property type="entry name" value="RNA_pol_Rpb1_1"/>
    <property type="match status" value="1"/>
</dbReference>
<dbReference type="Pfam" id="PF00623">
    <property type="entry name" value="RNA_pol_Rpb1_2"/>
    <property type="match status" value="1"/>
</dbReference>
<dbReference type="Pfam" id="PF04983">
    <property type="entry name" value="RNA_pol_Rpb1_3"/>
    <property type="match status" value="1"/>
</dbReference>
<dbReference type="Pfam" id="PF05000">
    <property type="entry name" value="RNA_pol_Rpb1_4"/>
    <property type="match status" value="1"/>
</dbReference>
<dbReference type="Pfam" id="PF04998">
    <property type="entry name" value="RNA_pol_Rpb1_5"/>
    <property type="match status" value="1"/>
</dbReference>
<dbReference type="SMART" id="SM00663">
    <property type="entry name" value="RPOLA_N"/>
    <property type="match status" value="1"/>
</dbReference>
<dbReference type="SUPFAM" id="SSF64484">
    <property type="entry name" value="beta and beta-prime subunits of DNA dependent RNA-polymerase"/>
    <property type="match status" value="1"/>
</dbReference>
<reference key="1">
    <citation type="submission" date="2006-06" db="EMBL/GenBank/DDBJ databases">
        <title>Complete sequence of chromosome of Mycobacterium sp. MCS.</title>
        <authorList>
            <consortium name="US DOE Joint Genome Institute"/>
            <person name="Copeland A."/>
            <person name="Lucas S."/>
            <person name="Lapidus A."/>
            <person name="Barry K."/>
            <person name="Detter J.C."/>
            <person name="Glavina del Rio T."/>
            <person name="Hammon N."/>
            <person name="Israni S."/>
            <person name="Dalin E."/>
            <person name="Tice H."/>
            <person name="Pitluck S."/>
            <person name="Martinez M."/>
            <person name="Schmutz J."/>
            <person name="Larimer F."/>
            <person name="Land M."/>
            <person name="Hauser L."/>
            <person name="Kyrpides N."/>
            <person name="Kim E."/>
            <person name="Miller C.D."/>
            <person name="Hughes J.E."/>
            <person name="Anderson A.J."/>
            <person name="Sims R.C."/>
            <person name="Richardson P."/>
        </authorList>
    </citation>
    <scope>NUCLEOTIDE SEQUENCE [LARGE SCALE GENOMIC DNA]</scope>
    <source>
        <strain>MCS</strain>
    </source>
</reference>
<feature type="chain" id="PRO_0000308858" description="DNA-directed RNA polymerase subunit beta'">
    <location>
        <begin position="1"/>
        <end position="1315"/>
    </location>
</feature>
<feature type="binding site" evidence="1">
    <location>
        <position position="60"/>
    </location>
    <ligand>
        <name>Zn(2+)</name>
        <dbReference type="ChEBI" id="CHEBI:29105"/>
        <label>1</label>
    </ligand>
</feature>
<feature type="binding site" evidence="1">
    <location>
        <position position="62"/>
    </location>
    <ligand>
        <name>Zn(2+)</name>
        <dbReference type="ChEBI" id="CHEBI:29105"/>
        <label>1</label>
    </ligand>
</feature>
<feature type="binding site" evidence="1">
    <location>
        <position position="75"/>
    </location>
    <ligand>
        <name>Zn(2+)</name>
        <dbReference type="ChEBI" id="CHEBI:29105"/>
        <label>1</label>
    </ligand>
</feature>
<feature type="binding site" evidence="1">
    <location>
        <position position="78"/>
    </location>
    <ligand>
        <name>Zn(2+)</name>
        <dbReference type="ChEBI" id="CHEBI:29105"/>
        <label>1</label>
    </ligand>
</feature>
<feature type="binding site" evidence="1">
    <location>
        <position position="535"/>
    </location>
    <ligand>
        <name>Mg(2+)</name>
        <dbReference type="ChEBI" id="CHEBI:18420"/>
    </ligand>
</feature>
<feature type="binding site" evidence="1">
    <location>
        <position position="537"/>
    </location>
    <ligand>
        <name>Mg(2+)</name>
        <dbReference type="ChEBI" id="CHEBI:18420"/>
    </ligand>
</feature>
<feature type="binding site" evidence="1">
    <location>
        <position position="539"/>
    </location>
    <ligand>
        <name>Mg(2+)</name>
        <dbReference type="ChEBI" id="CHEBI:18420"/>
    </ligand>
</feature>
<feature type="binding site" evidence="1">
    <location>
        <position position="890"/>
    </location>
    <ligand>
        <name>Zn(2+)</name>
        <dbReference type="ChEBI" id="CHEBI:29105"/>
        <label>2</label>
    </ligand>
</feature>
<feature type="binding site" evidence="1">
    <location>
        <position position="967"/>
    </location>
    <ligand>
        <name>Zn(2+)</name>
        <dbReference type="ChEBI" id="CHEBI:29105"/>
        <label>2</label>
    </ligand>
</feature>
<feature type="binding site" evidence="1">
    <location>
        <position position="974"/>
    </location>
    <ligand>
        <name>Zn(2+)</name>
        <dbReference type="ChEBI" id="CHEBI:29105"/>
        <label>2</label>
    </ligand>
</feature>
<feature type="binding site" evidence="1">
    <location>
        <position position="977"/>
    </location>
    <ligand>
        <name>Zn(2+)</name>
        <dbReference type="ChEBI" id="CHEBI:29105"/>
        <label>2</label>
    </ligand>
</feature>
<sequence>MLDVNFFDELRIGLATADDIRQWSYGEVKKPETINYRTLKPEKDGLFCEKIFGPTRDWECYCGKYKRVRFKGIICERCGVEVTRAKVRRERMGHIELAAPVTHIWYFKGVPSRLGYLLDLAPKDLEKIIYFAAYVITDVNDEMRHNELSTLEAEMVVEKKAVEDQRDADLEARAQKLEADLAELEAEGAKSDVRRKVRDGGEREMRQLRDRAQRELDRLDEIWTTFTKLAPKQLIVDEVLYRELVDRYGEYFTGAMGAESIKKLIENFDIEAEAENLRETIRSGKGQKKLRALKRLKVVAAFQTNRNSPMGMVLDAVPVIPPELRPMVQLDGGRFATSDLNDLYRRVINRNNRLKRLIDLGAPEIIVNNEKRMLQESVDALFDNGRRGRPVTGPGNRPLKSLSDLLKGKQGRFRQNLLGKRVDYSGRSVIVVGPQLKLHQCGLPKLMALELFKPFVMKRLVDLNHAQNIKSAKRMVERQRPQVWDVLEEVIAEHPVLLNRAPTLHRLGIQAFEPQLVEGKAIQLHPLVCEAFNADFDGDQMAVHLPLSAEAQAEARILMLSSNNILSPASGKPLAMPRLDMVTGLYFLTTMIEGDKGEYRPAATDQPEEGVYSSPAEAIMAMDRGALSVRAKIKVRLTQLRPPAALEAELFENGWKPGLAWTAETTLGRVMFNELLPISYPFINEQMHKKVQARIINDLAERFPMIVVAQTVDKLKDAGFHWATRSGVTVSMADVLVPPQKQEILDRYEAEADGIERKYQRGALNHKERNDSLVKIWQDATEEVGKALEEHYPADNPIITIVKSGATGNFTQTRTLAGMKGLVTNPKGEFIPRPIKSSFREGLTVLEYFINTHGARKGLADTALRTADSGYLTRRLVDVSQDVIVREHDCETERGINVTLAERQPDGSLIRDPHVETSAFARTLATDAVDADGNVVIERGHDLGDPAIDKLLAAGIDHVKVRSVLTCASATGVCAMCYGRSMATGKLVDIGEAVGIVAAQSIGEPGTQLTMRTFHQGGVGEDITGGLPRVQELFEARVPRNKAPIADVSGRVQLEEGERFYKITIVPDDGGEEVVYDKLSKRQRLRVIKHEDGSEGVLSDGDHVEVGDQLMEGSADPHEVLRVQGPREVQIHLVHEVQEVYRAQGVSIHDKHIEVIVRQMLRRVTIIDSGATEFLPGSLTERAEFESENRRVVAEGGEPAAGRPVLMGITKASLATDSWLSAASFQETTRVLTDAAINCRSDKLQGLKENVIIGKLIPAGTGINRYRNIQVQPTEEARAAAYTIPSYEDQYYSPDFGQATGAAVPLDDYGYSDYR</sequence>
<name>RPOC_MYCSS</name>